<dbReference type="EC" id="3.2.1.28" evidence="1"/>
<dbReference type="EMBL" id="FM200053">
    <property type="protein sequence ID" value="CAR59157.1"/>
    <property type="molecule type" value="Genomic_DNA"/>
</dbReference>
<dbReference type="RefSeq" id="WP_000612832.1">
    <property type="nucleotide sequence ID" value="NC_011147.1"/>
</dbReference>
<dbReference type="SMR" id="B5BI56"/>
<dbReference type="CAZy" id="GH37">
    <property type="family name" value="Glycoside Hydrolase Family 37"/>
</dbReference>
<dbReference type="KEGG" id="sek:SSPA1005"/>
<dbReference type="HOGENOM" id="CLU_006451_3_1_6"/>
<dbReference type="Proteomes" id="UP000001869">
    <property type="component" value="Chromosome"/>
</dbReference>
<dbReference type="GO" id="GO:0042597">
    <property type="term" value="C:periplasmic space"/>
    <property type="evidence" value="ECO:0007669"/>
    <property type="project" value="UniProtKB-SubCell"/>
</dbReference>
<dbReference type="GO" id="GO:0004555">
    <property type="term" value="F:alpha,alpha-trehalase activity"/>
    <property type="evidence" value="ECO:0007669"/>
    <property type="project" value="UniProtKB-UniRule"/>
</dbReference>
<dbReference type="GO" id="GO:0071474">
    <property type="term" value="P:cellular hyperosmotic response"/>
    <property type="evidence" value="ECO:0007669"/>
    <property type="project" value="InterPro"/>
</dbReference>
<dbReference type="GO" id="GO:0005993">
    <property type="term" value="P:trehalose catabolic process"/>
    <property type="evidence" value="ECO:0007669"/>
    <property type="project" value="InterPro"/>
</dbReference>
<dbReference type="FunFam" id="1.50.10.10:FF:000003">
    <property type="entry name" value="Cytoplasmic trehalase"/>
    <property type="match status" value="1"/>
</dbReference>
<dbReference type="Gene3D" id="1.50.10.10">
    <property type="match status" value="1"/>
</dbReference>
<dbReference type="HAMAP" id="MF_01060">
    <property type="entry name" value="Peripl_trehalase"/>
    <property type="match status" value="1"/>
</dbReference>
<dbReference type="InterPro" id="IPR008928">
    <property type="entry name" value="6-hairpin_glycosidase_sf"/>
</dbReference>
<dbReference type="InterPro" id="IPR012341">
    <property type="entry name" value="6hp_glycosidase-like_sf"/>
</dbReference>
<dbReference type="InterPro" id="IPR001661">
    <property type="entry name" value="Glyco_hydro_37"/>
</dbReference>
<dbReference type="InterPro" id="IPR018232">
    <property type="entry name" value="Glyco_hydro_37_CS"/>
</dbReference>
<dbReference type="InterPro" id="IPR023720">
    <property type="entry name" value="Trehalase_periplasmic"/>
</dbReference>
<dbReference type="NCBIfam" id="NF009773">
    <property type="entry name" value="PRK13270.1"/>
    <property type="match status" value="1"/>
</dbReference>
<dbReference type="NCBIfam" id="NF009774">
    <property type="entry name" value="PRK13271.1"/>
    <property type="match status" value="1"/>
</dbReference>
<dbReference type="PANTHER" id="PTHR23403">
    <property type="entry name" value="TREHALASE"/>
    <property type="match status" value="1"/>
</dbReference>
<dbReference type="PANTHER" id="PTHR23403:SF1">
    <property type="entry name" value="TREHALASE"/>
    <property type="match status" value="1"/>
</dbReference>
<dbReference type="Pfam" id="PF01204">
    <property type="entry name" value="Trehalase"/>
    <property type="match status" value="1"/>
</dbReference>
<dbReference type="PRINTS" id="PR00744">
    <property type="entry name" value="GLHYDRLASE37"/>
</dbReference>
<dbReference type="SUPFAM" id="SSF48208">
    <property type="entry name" value="Six-hairpin glycosidases"/>
    <property type="match status" value="1"/>
</dbReference>
<dbReference type="PROSITE" id="PS00927">
    <property type="entry name" value="TREHALASE_1"/>
    <property type="match status" value="1"/>
</dbReference>
<dbReference type="PROSITE" id="PS00928">
    <property type="entry name" value="TREHALASE_2"/>
    <property type="match status" value="1"/>
</dbReference>
<comment type="function">
    <text evidence="1">Provides the cells with the ability to utilize trehalose at high osmolarity by splitting it into glucose molecules that can subsequently be taken up by the phosphotransferase-mediated uptake system.</text>
</comment>
<comment type="catalytic activity">
    <reaction evidence="1">
        <text>alpha,alpha-trehalose + H2O = alpha-D-glucose + beta-D-glucose</text>
        <dbReference type="Rhea" id="RHEA:32675"/>
        <dbReference type="ChEBI" id="CHEBI:15377"/>
        <dbReference type="ChEBI" id="CHEBI:15903"/>
        <dbReference type="ChEBI" id="CHEBI:16551"/>
        <dbReference type="ChEBI" id="CHEBI:17925"/>
        <dbReference type="EC" id="3.2.1.28"/>
    </reaction>
</comment>
<comment type="subunit">
    <text evidence="1">Monomer.</text>
</comment>
<comment type="subcellular location">
    <subcellularLocation>
        <location evidence="1">Periplasm</location>
    </subcellularLocation>
</comment>
<comment type="similarity">
    <text evidence="1">Belongs to the glycosyl hydrolase 37 family.</text>
</comment>
<reference key="1">
    <citation type="journal article" date="2009" name="BMC Genomics">
        <title>Pseudogene accumulation in the evolutionary histories of Salmonella enterica serovars Paratyphi A and Typhi.</title>
        <authorList>
            <person name="Holt K.E."/>
            <person name="Thomson N.R."/>
            <person name="Wain J."/>
            <person name="Langridge G.C."/>
            <person name="Hasan R."/>
            <person name="Bhutta Z.A."/>
            <person name="Quail M.A."/>
            <person name="Norbertczak H."/>
            <person name="Walker D."/>
            <person name="Simmonds M."/>
            <person name="White B."/>
            <person name="Bason N."/>
            <person name="Mungall K."/>
            <person name="Dougan G."/>
            <person name="Parkhill J."/>
        </authorList>
    </citation>
    <scope>NUCLEOTIDE SEQUENCE [LARGE SCALE GENOMIC DNA]</scope>
    <source>
        <strain>AKU_12601</strain>
    </source>
</reference>
<feature type="signal peptide" evidence="1">
    <location>
        <begin position="1"/>
        <end position="34"/>
    </location>
</feature>
<feature type="chain" id="PRO_1000136426" description="Periplasmic trehalase">
    <location>
        <begin position="35"/>
        <end position="570"/>
    </location>
</feature>
<feature type="region of interest" description="Disordered" evidence="2">
    <location>
        <begin position="544"/>
        <end position="570"/>
    </location>
</feature>
<feature type="compositionally biased region" description="Low complexity" evidence="2">
    <location>
        <begin position="554"/>
        <end position="570"/>
    </location>
</feature>
<feature type="active site" description="Proton donor/acceptor" evidence="1">
    <location>
        <position position="319"/>
    </location>
</feature>
<feature type="active site" description="Proton donor/acceptor" evidence="1">
    <location>
        <position position="503"/>
    </location>
</feature>
<feature type="binding site" evidence="1">
    <location>
        <position position="159"/>
    </location>
    <ligand>
        <name>substrate</name>
    </ligand>
</feature>
<feature type="binding site" evidence="1">
    <location>
        <begin position="166"/>
        <end position="167"/>
    </location>
    <ligand>
        <name>substrate</name>
    </ligand>
</feature>
<feature type="binding site" evidence="1">
    <location>
        <position position="203"/>
    </location>
    <ligand>
        <name>substrate</name>
    </ligand>
</feature>
<feature type="binding site" evidence="1">
    <location>
        <begin position="212"/>
        <end position="214"/>
    </location>
    <ligand>
        <name>substrate</name>
    </ligand>
</feature>
<feature type="binding site" evidence="1">
    <location>
        <begin position="284"/>
        <end position="286"/>
    </location>
    <ligand>
        <name>substrate</name>
    </ligand>
</feature>
<feature type="binding site" evidence="1">
    <location>
        <position position="317"/>
    </location>
    <ligand>
        <name>substrate</name>
    </ligand>
</feature>
<feature type="binding site" evidence="1">
    <location>
        <position position="518"/>
    </location>
    <ligand>
        <name>substrate</name>
    </ligand>
</feature>
<proteinExistence type="inferred from homology"/>
<gene>
    <name evidence="1" type="primary">treA</name>
    <name type="ordered locus">SSPA1005</name>
</gene>
<name>TREA_SALPK</name>
<organism>
    <name type="scientific">Salmonella paratyphi A (strain AKU_12601)</name>
    <dbReference type="NCBI Taxonomy" id="554290"/>
    <lineage>
        <taxon>Bacteria</taxon>
        <taxon>Pseudomonadati</taxon>
        <taxon>Pseudomonadota</taxon>
        <taxon>Gammaproteobacteria</taxon>
        <taxon>Enterobacterales</taxon>
        <taxon>Enterobacteriaceae</taxon>
        <taxon>Salmonella</taxon>
    </lineage>
</organism>
<evidence type="ECO:0000255" key="1">
    <source>
        <dbReference type="HAMAP-Rule" id="MF_01060"/>
    </source>
</evidence>
<evidence type="ECO:0000256" key="2">
    <source>
        <dbReference type="SAM" id="MobiDB-lite"/>
    </source>
</evidence>
<protein>
    <recommendedName>
        <fullName evidence="1">Periplasmic trehalase</fullName>
        <ecNumber evidence="1">3.2.1.28</ecNumber>
    </recommendedName>
    <alternativeName>
        <fullName evidence="1">Alpha,alpha-trehalase</fullName>
    </alternativeName>
    <alternativeName>
        <fullName evidence="1">Alpha,alpha-trehalose glucohydrolase</fullName>
    </alternativeName>
</protein>
<keyword id="KW-0326">Glycosidase</keyword>
<keyword id="KW-0378">Hydrolase</keyword>
<keyword id="KW-0574">Periplasm</keyword>
<keyword id="KW-0732">Signal</keyword>
<sequence>MIPPEIRRSVLLQKAIKLALAGTLLTFASFSATAADPSSDTETPQPPDILLGPLFNDVQNAKLFPDQKTFADAIPNSDPLMILADYRMQRNQSGFDLRHFVDVNFTLPKAGEKYVPPAGQSLREHIDGLWPVLTRSTKNVEKWDSLLPLPESYVVPGGRFREIYYWDSYFTMLGLAESGHWDKVADMVANFGYEIDAWGHIPNGNRTYYLSRSQPPFFAFMVELLAQHEGDDALKEYLPQLQKEYAYWMEGVETLQPGQQNQRVVKLEDGSVLNRYWDDRDTPRPESWVEDIATAKSNPNRPATEIYRDLRSAAASGWDFSSRWMDNPQQLSTIRTTTIVPVDLNALLYQLEKTLARASAAAGDRAKASQYDALANARQKAIEMHLWNNKEGWYADYDLQNNKIRDQLTAAALFPLYVNAAAKDRAVKVAAAAQAHLLQPGGLATTSVKSGQQWDAPNGWAPLQWVAAEGLQNYGQDDVAMEVTWRFLTNVQHTYDREKKLVEKYDVSSTGTGGGGGEYPLQDGFGWTNGVTLKMLDLICPQEKPCDSVPSTRPASLSATPTKTPSAATQ</sequence>
<accession>B5BI56</accession>